<name>PLSB_HAEI8</name>
<feature type="chain" id="PRO_1000049433" description="Glycerol-3-phosphate acyltransferase">
    <location>
        <begin position="1"/>
        <end position="810"/>
    </location>
</feature>
<feature type="short sequence motif" description="HXXXXD motif">
    <location>
        <begin position="305"/>
        <end position="310"/>
    </location>
</feature>
<sequence length="810" mass="92789">MANFINMYRQLLSLPLSALVKNNPIPANPIEELSLNIHQPIVYVLPYTSQTDFVIFRRNCLALGLPDPAEKNEINGVKLPRYVYLDEGRRIFKSKGAKDETTTIFNKYLELHRTSESLDVQLIPVSVLWGRSPGQEDKSDLPNLRLLNGIQKTFAAIWFGRDTFVRFSQAVSLRYMVVEHGSDEKIAQKLARVAKMHFAKQRISATGPRLPNRQAMFNKLLQSEAIRRAIEDEAKSKNISIEKAQKEAYKILDEIAADVSHSSLRAVDRFLRWLWNKLYSGIDVQNSNRVRKLALEGHEIVYVPCHRSHIDYLLLSYVLYHQGLVPPHIAAGINLNFWPIGRMFRSWGAFFIRRTFKGNRLYSAIFREYLSELFHRGYSVEYFIEGGRSRTGRLLAPKTGMMSMTLQALQHSQTRPISIVPVYVGYEHVLEVDTYAKELRGAAKEKENAGLVLRVIKKLRNLGQGFVNFGEPITLSNYLSQHFPDWKEQNHEEKPQWFTPAVNNISKQVMININKAAAVNSMNLVGTALLSSRQRALSREQLLEQLSSYQQLLQNVPYSTDVVLPNVTPQAMLEHVLALDRIGVLIEKDNFGEIVRLERSSAVLMTYYRNNIQHLFVLPSLVASIILHYEAIQKDLLLDAIRKIYPFLQGELFLHFNEDELNVQIHQIINEFARQSVINSNDNFLSINKSKVRILQLWSAGTREILQRYYITVTILQKQPAISRAELEKESQLVAQRLSVLHGINAPEFFDKAVFSSFIANLKEQRYFDESGYTVLDKIEELASTLSHLISTEICLTVKGTIEKSEDLSS</sequence>
<reference key="1">
    <citation type="journal article" date="2005" name="J. Bacteriol.">
        <title>Genomic sequence of an otitis media isolate of nontypeable Haemophilus influenzae: comparative study with H. influenzae serotype d, strain KW20.</title>
        <authorList>
            <person name="Harrison A."/>
            <person name="Dyer D.W."/>
            <person name="Gillaspy A."/>
            <person name="Ray W.C."/>
            <person name="Mungur R."/>
            <person name="Carson M.B."/>
            <person name="Zhong H."/>
            <person name="Gipson J."/>
            <person name="Gipson M."/>
            <person name="Johnson L.S."/>
            <person name="Lewis L."/>
            <person name="Bakaletz L.O."/>
            <person name="Munson R.S. Jr."/>
        </authorList>
    </citation>
    <scope>NUCLEOTIDE SEQUENCE [LARGE SCALE GENOMIC DNA]</scope>
    <source>
        <strain>86-028NP</strain>
    </source>
</reference>
<evidence type="ECO:0000255" key="1">
    <source>
        <dbReference type="HAMAP-Rule" id="MF_00393"/>
    </source>
</evidence>
<gene>
    <name evidence="1" type="primary">plsB</name>
    <name type="ordered locus">NTHI0904</name>
</gene>
<comment type="catalytic activity">
    <reaction evidence="1">
        <text>sn-glycerol 3-phosphate + an acyl-CoA = a 1-acyl-sn-glycero-3-phosphate + CoA</text>
        <dbReference type="Rhea" id="RHEA:15325"/>
        <dbReference type="ChEBI" id="CHEBI:57287"/>
        <dbReference type="ChEBI" id="CHEBI:57597"/>
        <dbReference type="ChEBI" id="CHEBI:57970"/>
        <dbReference type="ChEBI" id="CHEBI:58342"/>
        <dbReference type="EC" id="2.3.1.15"/>
    </reaction>
</comment>
<comment type="pathway">
    <text evidence="1">Phospholipid metabolism; CDP-diacylglycerol biosynthesis; CDP-diacylglycerol from sn-glycerol 3-phosphate: step 1/3.</text>
</comment>
<comment type="subcellular location">
    <subcellularLocation>
        <location evidence="1">Cell inner membrane</location>
        <topology evidence="1">Peripheral membrane protein</topology>
        <orientation evidence="1">Cytoplasmic side</orientation>
    </subcellularLocation>
</comment>
<comment type="domain">
    <text evidence="1">The HXXXXD motif is essential for acyltransferase activity and may constitute the binding site for the phosphate moiety of the glycerol-3-phosphate.</text>
</comment>
<comment type="similarity">
    <text evidence="1">Belongs to the GPAT/DAPAT family.</text>
</comment>
<keyword id="KW-0012">Acyltransferase</keyword>
<keyword id="KW-0997">Cell inner membrane</keyword>
<keyword id="KW-1003">Cell membrane</keyword>
<keyword id="KW-0444">Lipid biosynthesis</keyword>
<keyword id="KW-0443">Lipid metabolism</keyword>
<keyword id="KW-0472">Membrane</keyword>
<keyword id="KW-0594">Phospholipid biosynthesis</keyword>
<keyword id="KW-1208">Phospholipid metabolism</keyword>
<keyword id="KW-0808">Transferase</keyword>
<dbReference type="EC" id="2.3.1.15" evidence="1"/>
<dbReference type="EMBL" id="CP000057">
    <property type="protein sequence ID" value="AAX87797.1"/>
    <property type="molecule type" value="Genomic_DNA"/>
</dbReference>
<dbReference type="RefSeq" id="WP_011272204.1">
    <property type="nucleotide sequence ID" value="NC_007146.2"/>
</dbReference>
<dbReference type="SMR" id="Q4QMF0"/>
<dbReference type="GeneID" id="93219785"/>
<dbReference type="KEGG" id="hit:NTHI0904"/>
<dbReference type="HOGENOM" id="CLU_015407_0_0_6"/>
<dbReference type="UniPathway" id="UPA00557">
    <property type="reaction ID" value="UER00612"/>
</dbReference>
<dbReference type="Proteomes" id="UP000002525">
    <property type="component" value="Chromosome"/>
</dbReference>
<dbReference type="GO" id="GO:0005886">
    <property type="term" value="C:plasma membrane"/>
    <property type="evidence" value="ECO:0007669"/>
    <property type="project" value="UniProtKB-SubCell"/>
</dbReference>
<dbReference type="GO" id="GO:0004366">
    <property type="term" value="F:glycerol-3-phosphate O-acyltransferase activity"/>
    <property type="evidence" value="ECO:0007669"/>
    <property type="project" value="UniProtKB-UniRule"/>
</dbReference>
<dbReference type="GO" id="GO:0016024">
    <property type="term" value="P:CDP-diacylglycerol biosynthetic process"/>
    <property type="evidence" value="ECO:0007669"/>
    <property type="project" value="UniProtKB-UniRule"/>
</dbReference>
<dbReference type="GO" id="GO:0006631">
    <property type="term" value="P:fatty acid metabolic process"/>
    <property type="evidence" value="ECO:0007669"/>
    <property type="project" value="TreeGrafter"/>
</dbReference>
<dbReference type="CDD" id="cd07993">
    <property type="entry name" value="LPLAT_DHAPAT-like"/>
    <property type="match status" value="1"/>
</dbReference>
<dbReference type="HAMAP" id="MF_00393">
    <property type="entry name" value="Glyc3P_acyltrans"/>
    <property type="match status" value="1"/>
</dbReference>
<dbReference type="InterPro" id="IPR022284">
    <property type="entry name" value="GPAT/DHAPAT"/>
</dbReference>
<dbReference type="InterPro" id="IPR045520">
    <property type="entry name" value="GPAT/DHAPAT_C"/>
</dbReference>
<dbReference type="InterPro" id="IPR041728">
    <property type="entry name" value="GPAT/DHAPAT_LPLAT"/>
</dbReference>
<dbReference type="InterPro" id="IPR028354">
    <property type="entry name" value="GPAT_PlsB"/>
</dbReference>
<dbReference type="InterPro" id="IPR002123">
    <property type="entry name" value="Plipid/glycerol_acylTrfase"/>
</dbReference>
<dbReference type="NCBIfam" id="TIGR03703">
    <property type="entry name" value="plsB"/>
    <property type="match status" value="1"/>
</dbReference>
<dbReference type="NCBIfam" id="NF003441">
    <property type="entry name" value="PRK04974.1"/>
    <property type="match status" value="1"/>
</dbReference>
<dbReference type="PANTHER" id="PTHR12563:SF17">
    <property type="entry name" value="DIHYDROXYACETONE PHOSPHATE ACYLTRANSFERASE"/>
    <property type="match status" value="1"/>
</dbReference>
<dbReference type="PANTHER" id="PTHR12563">
    <property type="entry name" value="GLYCEROL-3-PHOSPHATE ACYLTRANSFERASE"/>
    <property type="match status" value="1"/>
</dbReference>
<dbReference type="Pfam" id="PF01553">
    <property type="entry name" value="Acyltransferase"/>
    <property type="match status" value="1"/>
</dbReference>
<dbReference type="Pfam" id="PF19277">
    <property type="entry name" value="GPAT_C"/>
    <property type="match status" value="1"/>
</dbReference>
<dbReference type="PIRSF" id="PIRSF500064">
    <property type="entry name" value="GPAT"/>
    <property type="match status" value="1"/>
</dbReference>
<dbReference type="PIRSF" id="PIRSF000437">
    <property type="entry name" value="GPAT_DHAPAT"/>
    <property type="match status" value="1"/>
</dbReference>
<dbReference type="SMART" id="SM00563">
    <property type="entry name" value="PlsC"/>
    <property type="match status" value="1"/>
</dbReference>
<dbReference type="SUPFAM" id="SSF69593">
    <property type="entry name" value="Glycerol-3-phosphate (1)-acyltransferase"/>
    <property type="match status" value="1"/>
</dbReference>
<organism>
    <name type="scientific">Haemophilus influenzae (strain 86-028NP)</name>
    <dbReference type="NCBI Taxonomy" id="281310"/>
    <lineage>
        <taxon>Bacteria</taxon>
        <taxon>Pseudomonadati</taxon>
        <taxon>Pseudomonadota</taxon>
        <taxon>Gammaproteobacteria</taxon>
        <taxon>Pasteurellales</taxon>
        <taxon>Pasteurellaceae</taxon>
        <taxon>Haemophilus</taxon>
    </lineage>
</organism>
<accession>Q4QMF0</accession>
<proteinExistence type="inferred from homology"/>
<protein>
    <recommendedName>
        <fullName evidence="1">Glycerol-3-phosphate acyltransferase</fullName>
        <shortName evidence="1">GPAT</shortName>
        <ecNumber evidence="1">2.3.1.15</ecNumber>
    </recommendedName>
</protein>